<sequence length="381" mass="42832">MINLRKTHPLLKIINHSFIDLPAPSNISAWWNFGSLLGICLMIQILTGLFLAMHYTSDTMTAFSSVAHICRDVNHGWLIRNLHANGASMFFMCLFLHVGRGIYYGSYLYKETWNIGVILLLTVMATAFVGYVLPWGQMSFWGATVITNLLSAIPYIGQTLVEWVWGGFSVDNATLTRFFALHFILPFIITALAIVHLLFLHETGSNNPSGINPDSDKIPFHPYYTIKDALGLMFLLLVLLLLALFSPDLLGDPDNFSPANPLNTPPHIKPEWYFLFAYAILRSIPNKLGGVLALLASILILLIIPLLHTANQRSMMFRPISQTLFWILTANLITLTWIGGQPVEQPFIIIGQLASMLYFLLILVLMPLAGLLENYMLKPEW</sequence>
<organism>
    <name type="scientific">Dasycercus cristicauda</name>
    <name type="common">Crest-tailed mulgara</name>
    <dbReference type="NCBI Taxonomy" id="32542"/>
    <lineage>
        <taxon>Eukaryota</taxon>
        <taxon>Metazoa</taxon>
        <taxon>Chordata</taxon>
        <taxon>Craniata</taxon>
        <taxon>Vertebrata</taxon>
        <taxon>Euteleostomi</taxon>
        <taxon>Mammalia</taxon>
        <taxon>Metatheria</taxon>
        <taxon>Dasyuromorphia</taxon>
        <taxon>Dasyuridae</taxon>
        <taxon>Dasycercus</taxon>
    </lineage>
</organism>
<dbReference type="EMBL" id="U07578">
    <property type="protein sequence ID" value="AAB88756.1"/>
    <property type="molecule type" value="Genomic_DNA"/>
</dbReference>
<dbReference type="SMR" id="Q34302"/>
<dbReference type="GO" id="GO:0005743">
    <property type="term" value="C:mitochondrial inner membrane"/>
    <property type="evidence" value="ECO:0007669"/>
    <property type="project" value="UniProtKB-SubCell"/>
</dbReference>
<dbReference type="GO" id="GO:0045275">
    <property type="term" value="C:respiratory chain complex III"/>
    <property type="evidence" value="ECO:0007669"/>
    <property type="project" value="InterPro"/>
</dbReference>
<dbReference type="GO" id="GO:0046872">
    <property type="term" value="F:metal ion binding"/>
    <property type="evidence" value="ECO:0007669"/>
    <property type="project" value="UniProtKB-KW"/>
</dbReference>
<dbReference type="GO" id="GO:0008121">
    <property type="term" value="F:ubiquinol-cytochrome-c reductase activity"/>
    <property type="evidence" value="ECO:0007669"/>
    <property type="project" value="InterPro"/>
</dbReference>
<dbReference type="GO" id="GO:0006122">
    <property type="term" value="P:mitochondrial electron transport, ubiquinol to cytochrome c"/>
    <property type="evidence" value="ECO:0007669"/>
    <property type="project" value="TreeGrafter"/>
</dbReference>
<dbReference type="CDD" id="cd00290">
    <property type="entry name" value="cytochrome_b_C"/>
    <property type="match status" value="1"/>
</dbReference>
<dbReference type="CDD" id="cd00284">
    <property type="entry name" value="Cytochrome_b_N"/>
    <property type="match status" value="1"/>
</dbReference>
<dbReference type="FunFam" id="1.20.810.10:FF:000002">
    <property type="entry name" value="Cytochrome b"/>
    <property type="match status" value="1"/>
</dbReference>
<dbReference type="Gene3D" id="1.20.810.10">
    <property type="entry name" value="Cytochrome Bc1 Complex, Chain C"/>
    <property type="match status" value="1"/>
</dbReference>
<dbReference type="InterPro" id="IPR005798">
    <property type="entry name" value="Cyt_b/b6_C"/>
</dbReference>
<dbReference type="InterPro" id="IPR036150">
    <property type="entry name" value="Cyt_b/b6_C_sf"/>
</dbReference>
<dbReference type="InterPro" id="IPR005797">
    <property type="entry name" value="Cyt_b/b6_N"/>
</dbReference>
<dbReference type="InterPro" id="IPR027387">
    <property type="entry name" value="Cytb/b6-like_sf"/>
</dbReference>
<dbReference type="InterPro" id="IPR030689">
    <property type="entry name" value="Cytochrome_b"/>
</dbReference>
<dbReference type="InterPro" id="IPR048260">
    <property type="entry name" value="Cytochrome_b_C_euk/bac"/>
</dbReference>
<dbReference type="InterPro" id="IPR048259">
    <property type="entry name" value="Cytochrome_b_N_euk/bac"/>
</dbReference>
<dbReference type="InterPro" id="IPR016174">
    <property type="entry name" value="Di-haem_cyt_TM"/>
</dbReference>
<dbReference type="PANTHER" id="PTHR19271">
    <property type="entry name" value="CYTOCHROME B"/>
    <property type="match status" value="1"/>
</dbReference>
<dbReference type="PANTHER" id="PTHR19271:SF16">
    <property type="entry name" value="CYTOCHROME B"/>
    <property type="match status" value="1"/>
</dbReference>
<dbReference type="Pfam" id="PF00032">
    <property type="entry name" value="Cytochrom_B_C"/>
    <property type="match status" value="1"/>
</dbReference>
<dbReference type="Pfam" id="PF00033">
    <property type="entry name" value="Cytochrome_B"/>
    <property type="match status" value="1"/>
</dbReference>
<dbReference type="PIRSF" id="PIRSF038885">
    <property type="entry name" value="COB"/>
    <property type="match status" value="1"/>
</dbReference>
<dbReference type="SUPFAM" id="SSF81648">
    <property type="entry name" value="a domain/subunit of cytochrome bc1 complex (Ubiquinol-cytochrome c reductase)"/>
    <property type="match status" value="1"/>
</dbReference>
<dbReference type="SUPFAM" id="SSF81342">
    <property type="entry name" value="Transmembrane di-heme cytochromes"/>
    <property type="match status" value="1"/>
</dbReference>
<dbReference type="PROSITE" id="PS51003">
    <property type="entry name" value="CYTB_CTER"/>
    <property type="match status" value="1"/>
</dbReference>
<dbReference type="PROSITE" id="PS51002">
    <property type="entry name" value="CYTB_NTER"/>
    <property type="match status" value="1"/>
</dbReference>
<keyword id="KW-0249">Electron transport</keyword>
<keyword id="KW-0349">Heme</keyword>
<keyword id="KW-0408">Iron</keyword>
<keyword id="KW-0472">Membrane</keyword>
<keyword id="KW-0479">Metal-binding</keyword>
<keyword id="KW-0496">Mitochondrion</keyword>
<keyword id="KW-0999">Mitochondrion inner membrane</keyword>
<keyword id="KW-0679">Respiratory chain</keyword>
<keyword id="KW-0812">Transmembrane</keyword>
<keyword id="KW-1133">Transmembrane helix</keyword>
<keyword id="KW-0813">Transport</keyword>
<keyword id="KW-0830">Ubiquinone</keyword>
<proteinExistence type="inferred from homology"/>
<protein>
    <recommendedName>
        <fullName>Cytochrome b</fullName>
    </recommendedName>
    <alternativeName>
        <fullName>Complex III subunit 3</fullName>
    </alternativeName>
    <alternativeName>
        <fullName>Complex III subunit III</fullName>
    </alternativeName>
    <alternativeName>
        <fullName>Cytochrome b-c1 complex subunit 3</fullName>
    </alternativeName>
    <alternativeName>
        <fullName>Ubiquinol-cytochrome-c reductase complex cytochrome b subunit</fullName>
    </alternativeName>
</protein>
<geneLocation type="mitochondrion"/>
<evidence type="ECO:0000250" key="1"/>
<evidence type="ECO:0000250" key="2">
    <source>
        <dbReference type="UniProtKB" id="P00157"/>
    </source>
</evidence>
<evidence type="ECO:0000255" key="3">
    <source>
        <dbReference type="PROSITE-ProRule" id="PRU00967"/>
    </source>
</evidence>
<evidence type="ECO:0000255" key="4">
    <source>
        <dbReference type="PROSITE-ProRule" id="PRU00968"/>
    </source>
</evidence>
<name>CYB_DASCR</name>
<feature type="chain" id="PRO_0000060863" description="Cytochrome b">
    <location>
        <begin position="1"/>
        <end position="381"/>
    </location>
</feature>
<feature type="transmembrane region" description="Helical" evidence="2">
    <location>
        <begin position="33"/>
        <end position="53"/>
    </location>
</feature>
<feature type="transmembrane region" description="Helical" evidence="2">
    <location>
        <begin position="77"/>
        <end position="98"/>
    </location>
</feature>
<feature type="transmembrane region" description="Helical" evidence="2">
    <location>
        <begin position="113"/>
        <end position="133"/>
    </location>
</feature>
<feature type="transmembrane region" description="Helical" evidence="2">
    <location>
        <begin position="178"/>
        <end position="198"/>
    </location>
</feature>
<feature type="transmembrane region" description="Helical" evidence="2">
    <location>
        <begin position="226"/>
        <end position="246"/>
    </location>
</feature>
<feature type="transmembrane region" description="Helical" evidence="2">
    <location>
        <begin position="288"/>
        <end position="308"/>
    </location>
</feature>
<feature type="transmembrane region" description="Helical" evidence="2">
    <location>
        <begin position="320"/>
        <end position="340"/>
    </location>
</feature>
<feature type="transmembrane region" description="Helical" evidence="2">
    <location>
        <begin position="347"/>
        <end position="367"/>
    </location>
</feature>
<feature type="binding site" description="axial binding residue" evidence="2">
    <location>
        <position position="83"/>
    </location>
    <ligand>
        <name>heme b</name>
        <dbReference type="ChEBI" id="CHEBI:60344"/>
        <label>b562</label>
    </ligand>
    <ligandPart>
        <name>Fe</name>
        <dbReference type="ChEBI" id="CHEBI:18248"/>
    </ligandPart>
</feature>
<feature type="binding site" description="axial binding residue" evidence="2">
    <location>
        <position position="97"/>
    </location>
    <ligand>
        <name>heme b</name>
        <dbReference type="ChEBI" id="CHEBI:60344"/>
        <label>b566</label>
    </ligand>
    <ligandPart>
        <name>Fe</name>
        <dbReference type="ChEBI" id="CHEBI:18248"/>
    </ligandPart>
</feature>
<feature type="binding site" description="axial binding residue" evidence="2">
    <location>
        <position position="182"/>
    </location>
    <ligand>
        <name>heme b</name>
        <dbReference type="ChEBI" id="CHEBI:60344"/>
        <label>b562</label>
    </ligand>
    <ligandPart>
        <name>Fe</name>
        <dbReference type="ChEBI" id="CHEBI:18248"/>
    </ligandPart>
</feature>
<feature type="binding site" description="axial binding residue" evidence="2">
    <location>
        <position position="196"/>
    </location>
    <ligand>
        <name>heme b</name>
        <dbReference type="ChEBI" id="CHEBI:60344"/>
        <label>b566</label>
    </ligand>
    <ligandPart>
        <name>Fe</name>
        <dbReference type="ChEBI" id="CHEBI:18248"/>
    </ligandPart>
</feature>
<feature type="binding site" evidence="2">
    <location>
        <position position="201"/>
    </location>
    <ligand>
        <name>a ubiquinone</name>
        <dbReference type="ChEBI" id="CHEBI:16389"/>
    </ligand>
</feature>
<comment type="function">
    <text evidence="2">Component of the ubiquinol-cytochrome c reductase complex (complex III or cytochrome b-c1 complex) that is part of the mitochondrial respiratory chain. The b-c1 complex mediates electron transfer from ubiquinol to cytochrome c. Contributes to the generation of a proton gradient across the mitochondrial membrane that is then used for ATP synthesis.</text>
</comment>
<comment type="cofactor">
    <cofactor evidence="2">
        <name>heme b</name>
        <dbReference type="ChEBI" id="CHEBI:60344"/>
    </cofactor>
    <text evidence="2">Binds 2 heme b groups non-covalently.</text>
</comment>
<comment type="subunit">
    <text evidence="2">The cytochrome bc1 complex contains 11 subunits: 3 respiratory subunits (MT-CYB, CYC1 and UQCRFS1), 2 core proteins (UQCRC1 and UQCRC2) and 6 low-molecular weight proteins (UQCRH/QCR6, UQCRB/QCR7, UQCRQ/QCR8, UQCR10/QCR9, UQCR11/QCR10 and a cleavage product of UQCRFS1). This cytochrome bc1 complex then forms a dimer.</text>
</comment>
<comment type="subcellular location">
    <subcellularLocation>
        <location evidence="2">Mitochondrion inner membrane</location>
        <topology evidence="2">Multi-pass membrane protein</topology>
    </subcellularLocation>
</comment>
<comment type="miscellaneous">
    <text evidence="1">Heme 1 (or BL or b562) is low-potential and absorbs at about 562 nm, and heme 2 (or BH or b566) is high-potential and absorbs at about 566 nm.</text>
</comment>
<comment type="similarity">
    <text evidence="3 4">Belongs to the cytochrome b family.</text>
</comment>
<comment type="caution">
    <text evidence="2">The full-length protein contains only eight transmembrane helices, not nine as predicted by bioinformatics tools.</text>
</comment>
<accession>Q34302</accession>
<reference key="1">
    <citation type="journal article" date="1994" name="J. Mammal. Evol.">
        <title>Phylogenetic structure of the marsupial family Dasyuridae based on cytochrome-b DNA sequences.</title>
        <authorList>
            <person name="Krajewski C."/>
            <person name="Painter J."/>
            <person name="Buckley L."/>
            <person name="Westerman M."/>
        </authorList>
    </citation>
    <scope>NUCLEOTIDE SEQUENCE [GENOMIC DNA]</scope>
</reference>
<gene>
    <name type="primary">MT-CYB</name>
    <name type="synonym">COB</name>
    <name type="synonym">CYTB</name>
    <name type="synonym">MTCYB</name>
</gene>